<accession>Q64Z15</accession>
<gene>
    <name evidence="1" type="primary">argH</name>
    <name type="ordered locus">BF0512</name>
</gene>
<feature type="chain" id="PRO_1000116308" description="Argininosuccinate lyase">
    <location>
        <begin position="1"/>
        <end position="447"/>
    </location>
</feature>
<keyword id="KW-0028">Amino-acid biosynthesis</keyword>
<keyword id="KW-0055">Arginine biosynthesis</keyword>
<keyword id="KW-0963">Cytoplasm</keyword>
<keyword id="KW-0456">Lyase</keyword>
<protein>
    <recommendedName>
        <fullName evidence="1">Argininosuccinate lyase</fullName>
        <shortName evidence="1">ASAL</shortName>
        <ecNumber evidence="1">4.3.2.1</ecNumber>
    </recommendedName>
    <alternativeName>
        <fullName evidence="1">Arginosuccinase</fullName>
    </alternativeName>
</protein>
<reference key="1">
    <citation type="journal article" date="2004" name="Proc. Natl. Acad. Sci. U.S.A.">
        <title>Genomic analysis of Bacteroides fragilis reveals extensive DNA inversions regulating cell surface adaptation.</title>
        <authorList>
            <person name="Kuwahara T."/>
            <person name="Yamashita A."/>
            <person name="Hirakawa H."/>
            <person name="Nakayama H."/>
            <person name="Toh H."/>
            <person name="Okada N."/>
            <person name="Kuhara S."/>
            <person name="Hattori M."/>
            <person name="Hayashi T."/>
            <person name="Ohnishi Y."/>
        </authorList>
    </citation>
    <scope>NUCLEOTIDE SEQUENCE [LARGE SCALE GENOMIC DNA]</scope>
    <source>
        <strain>YCH46</strain>
    </source>
</reference>
<proteinExistence type="inferred from homology"/>
<name>ARLY_BACFR</name>
<comment type="catalytic activity">
    <reaction evidence="1">
        <text>2-(N(omega)-L-arginino)succinate = fumarate + L-arginine</text>
        <dbReference type="Rhea" id="RHEA:24020"/>
        <dbReference type="ChEBI" id="CHEBI:29806"/>
        <dbReference type="ChEBI" id="CHEBI:32682"/>
        <dbReference type="ChEBI" id="CHEBI:57472"/>
        <dbReference type="EC" id="4.3.2.1"/>
    </reaction>
</comment>
<comment type="pathway">
    <text evidence="1">Amino-acid biosynthesis; L-arginine biosynthesis; L-arginine from L-ornithine and carbamoyl phosphate: step 3/3.</text>
</comment>
<comment type="subcellular location">
    <subcellularLocation>
        <location evidence="1">Cytoplasm</location>
    </subcellularLocation>
</comment>
<comment type="similarity">
    <text evidence="1">Belongs to the lyase 1 family. Argininosuccinate lyase subfamily.</text>
</comment>
<organism>
    <name type="scientific">Bacteroides fragilis (strain YCH46)</name>
    <dbReference type="NCBI Taxonomy" id="295405"/>
    <lineage>
        <taxon>Bacteria</taxon>
        <taxon>Pseudomonadati</taxon>
        <taxon>Bacteroidota</taxon>
        <taxon>Bacteroidia</taxon>
        <taxon>Bacteroidales</taxon>
        <taxon>Bacteroidaceae</taxon>
        <taxon>Bacteroides</taxon>
    </lineage>
</organism>
<dbReference type="EC" id="4.3.2.1" evidence="1"/>
<dbReference type="EMBL" id="AP006841">
    <property type="protein sequence ID" value="BAD47261.1"/>
    <property type="molecule type" value="Genomic_DNA"/>
</dbReference>
<dbReference type="RefSeq" id="WP_005784384.1">
    <property type="nucleotide sequence ID" value="NZ_UYXF01000019.1"/>
</dbReference>
<dbReference type="RefSeq" id="YP_097795.1">
    <property type="nucleotide sequence ID" value="NC_006347.1"/>
</dbReference>
<dbReference type="SMR" id="Q64Z15"/>
<dbReference type="STRING" id="295405.BF0512"/>
<dbReference type="KEGG" id="bfr:BF0512"/>
<dbReference type="PATRIC" id="fig|295405.11.peg.528"/>
<dbReference type="HOGENOM" id="CLU_027272_2_0_10"/>
<dbReference type="OrthoDB" id="9769623at2"/>
<dbReference type="UniPathway" id="UPA00068">
    <property type="reaction ID" value="UER00114"/>
</dbReference>
<dbReference type="Proteomes" id="UP000002197">
    <property type="component" value="Chromosome"/>
</dbReference>
<dbReference type="GO" id="GO:0005829">
    <property type="term" value="C:cytosol"/>
    <property type="evidence" value="ECO:0007669"/>
    <property type="project" value="TreeGrafter"/>
</dbReference>
<dbReference type="GO" id="GO:0004056">
    <property type="term" value="F:argininosuccinate lyase activity"/>
    <property type="evidence" value="ECO:0007669"/>
    <property type="project" value="UniProtKB-UniRule"/>
</dbReference>
<dbReference type="GO" id="GO:0042450">
    <property type="term" value="P:arginine biosynthetic process via ornithine"/>
    <property type="evidence" value="ECO:0007669"/>
    <property type="project" value="InterPro"/>
</dbReference>
<dbReference type="GO" id="GO:0006526">
    <property type="term" value="P:L-arginine biosynthetic process"/>
    <property type="evidence" value="ECO:0007669"/>
    <property type="project" value="UniProtKB-UniRule"/>
</dbReference>
<dbReference type="CDD" id="cd01359">
    <property type="entry name" value="Argininosuccinate_lyase"/>
    <property type="match status" value="1"/>
</dbReference>
<dbReference type="Gene3D" id="1.10.40.30">
    <property type="entry name" value="Fumarase/aspartase (C-terminal domain)"/>
    <property type="match status" value="1"/>
</dbReference>
<dbReference type="Gene3D" id="1.20.200.10">
    <property type="entry name" value="Fumarase/aspartase (Central domain)"/>
    <property type="match status" value="1"/>
</dbReference>
<dbReference type="Gene3D" id="1.10.275.10">
    <property type="entry name" value="Fumarase/aspartase (N-terminal domain)"/>
    <property type="match status" value="1"/>
</dbReference>
<dbReference type="HAMAP" id="MF_00006">
    <property type="entry name" value="Arg_succ_lyase"/>
    <property type="match status" value="1"/>
</dbReference>
<dbReference type="InterPro" id="IPR009049">
    <property type="entry name" value="Argininosuccinate_lyase"/>
</dbReference>
<dbReference type="InterPro" id="IPR024083">
    <property type="entry name" value="Fumarase/histidase_N"/>
</dbReference>
<dbReference type="InterPro" id="IPR020557">
    <property type="entry name" value="Fumarate_lyase_CS"/>
</dbReference>
<dbReference type="InterPro" id="IPR000362">
    <property type="entry name" value="Fumarate_lyase_fam"/>
</dbReference>
<dbReference type="InterPro" id="IPR022761">
    <property type="entry name" value="Fumarate_lyase_N"/>
</dbReference>
<dbReference type="InterPro" id="IPR008948">
    <property type="entry name" value="L-Aspartase-like"/>
</dbReference>
<dbReference type="NCBIfam" id="TIGR00838">
    <property type="entry name" value="argH"/>
    <property type="match status" value="1"/>
</dbReference>
<dbReference type="PANTHER" id="PTHR43814">
    <property type="entry name" value="ARGININOSUCCINATE LYASE"/>
    <property type="match status" value="1"/>
</dbReference>
<dbReference type="PANTHER" id="PTHR43814:SF1">
    <property type="entry name" value="ARGININOSUCCINATE LYASE"/>
    <property type="match status" value="1"/>
</dbReference>
<dbReference type="Pfam" id="PF00206">
    <property type="entry name" value="Lyase_1"/>
    <property type="match status" value="1"/>
</dbReference>
<dbReference type="PRINTS" id="PR00145">
    <property type="entry name" value="ARGSUCLYASE"/>
</dbReference>
<dbReference type="PRINTS" id="PR00149">
    <property type="entry name" value="FUMRATELYASE"/>
</dbReference>
<dbReference type="SUPFAM" id="SSF48557">
    <property type="entry name" value="L-aspartase-like"/>
    <property type="match status" value="1"/>
</dbReference>
<dbReference type="PROSITE" id="PS00163">
    <property type="entry name" value="FUMARATE_LYASES"/>
    <property type="match status" value="1"/>
</dbReference>
<evidence type="ECO:0000255" key="1">
    <source>
        <dbReference type="HAMAP-Rule" id="MF_00006"/>
    </source>
</evidence>
<sequence length="447" mass="50813">MAQKLWEKSVEVNKDIERFTVGRDREMDLYLAKHDVLGSMAHITMLESIGLLTKEELAQLLTELKDIYASAERGEFVIEEGVEDVHSQVELMLTRRLGDVGKKIHSGRSRNDQVLLDLKLFTRTQIREVAEAVEQLFHVLIRQSERYKNVLMPGYTHLQIAMPSSFGLWFGAYAESLVDDMLFLQAAFKMCNKNPLGSAAGYGSSFPLNRTMTTELLGFDSLNYNVVYAQMGRGKMERNVAFALATLAGTISKLAFDACMFNSQNFGFVKLPDECTTGSSIMPHKKNPDVFELTRAKCNKLQSLPQQIMMIANNLPSGYFRDLQIIKEVFLPAFQELKDCLQMTTYIMNEIKVNEHILDDDKYLFIFSVEEVNRLAREGMPFRDAYKKVGLDIEAGHFSHDKQVHHTHEGSIGNLCNDEISALMQRTIEGFNFQGMEQAEKTLLGRK</sequence>